<accession>Q8Y870</accession>
<sequence length="333" mass="37881">MQLLKDKFGRVHDYIRISVTDRCNLRCVYCMPEEGLTFLPHEKVLSKDEIVSFMELMVKFGIKKVRITGGEPLLRTDIVEIVRGLGAIPEIEDISITTNAMYLAKKAEALKEAGLTRVNISLDSLHADRFKAITRGGRLQKVLDGIQKAEEVGLFPIKLNVVLIKGQNDDEITDFLRFTKDKDINIRFIEYMPIGHAGTSWKEKYLPLDTIFEACNEAGYEYEPVDSIRGNGPSENFRIKGAKGTFGVIHPVSAHFCDSCNRLRLTADGYIKACLYWDEEMNIRPFIQDPVKLMQLVQKAIDNKPENHEMALKLQDEVQSNKPTWRRMSQIGG</sequence>
<comment type="function">
    <text evidence="1">Catalyzes the cyclization of GTP to (8S)-3',8-cyclo-7,8-dihydroguanosine 5'-triphosphate.</text>
</comment>
<comment type="catalytic activity">
    <reaction evidence="1">
        <text>GTP + AH2 + S-adenosyl-L-methionine = (8S)-3',8-cyclo-7,8-dihydroguanosine 5'-triphosphate + 5'-deoxyadenosine + L-methionine + A + H(+)</text>
        <dbReference type="Rhea" id="RHEA:49576"/>
        <dbReference type="ChEBI" id="CHEBI:13193"/>
        <dbReference type="ChEBI" id="CHEBI:15378"/>
        <dbReference type="ChEBI" id="CHEBI:17319"/>
        <dbReference type="ChEBI" id="CHEBI:17499"/>
        <dbReference type="ChEBI" id="CHEBI:37565"/>
        <dbReference type="ChEBI" id="CHEBI:57844"/>
        <dbReference type="ChEBI" id="CHEBI:59789"/>
        <dbReference type="ChEBI" id="CHEBI:131766"/>
        <dbReference type="EC" id="4.1.99.22"/>
    </reaction>
</comment>
<comment type="cofactor">
    <cofactor evidence="1">
        <name>[4Fe-4S] cluster</name>
        <dbReference type="ChEBI" id="CHEBI:49883"/>
    </cofactor>
    <text evidence="1">Binds 2 [4Fe-4S] clusters. Binds 1 [4Fe-4S] cluster coordinated with 3 cysteines and an exchangeable S-adenosyl-L-methionine and 1 [4Fe-4S] cluster coordinated with 3 cysteines and the GTP-derived substrate.</text>
</comment>
<comment type="pathway">
    <text evidence="1">Cofactor biosynthesis; molybdopterin biosynthesis.</text>
</comment>
<comment type="subunit">
    <text evidence="1">Monomer and homodimer.</text>
</comment>
<comment type="similarity">
    <text evidence="1">Belongs to the radical SAM superfamily. MoaA family.</text>
</comment>
<protein>
    <recommendedName>
        <fullName evidence="1">GTP 3',8-cyclase</fullName>
        <ecNumber evidence="1">4.1.99.22</ecNumber>
    </recommendedName>
    <alternativeName>
        <fullName evidence="1">Molybdenum cofactor biosynthesis protein A</fullName>
    </alternativeName>
</protein>
<keyword id="KW-0004">4Fe-4S</keyword>
<keyword id="KW-0342">GTP-binding</keyword>
<keyword id="KW-0408">Iron</keyword>
<keyword id="KW-0411">Iron-sulfur</keyword>
<keyword id="KW-0456">Lyase</keyword>
<keyword id="KW-0479">Metal-binding</keyword>
<keyword id="KW-0501">Molybdenum cofactor biosynthesis</keyword>
<keyword id="KW-0547">Nucleotide-binding</keyword>
<keyword id="KW-1185">Reference proteome</keyword>
<keyword id="KW-0949">S-adenosyl-L-methionine</keyword>
<reference key="1">
    <citation type="journal article" date="2001" name="Science">
        <title>Comparative genomics of Listeria species.</title>
        <authorList>
            <person name="Glaser P."/>
            <person name="Frangeul L."/>
            <person name="Buchrieser C."/>
            <person name="Rusniok C."/>
            <person name="Amend A."/>
            <person name="Baquero F."/>
            <person name="Berche P."/>
            <person name="Bloecker H."/>
            <person name="Brandt P."/>
            <person name="Chakraborty T."/>
            <person name="Charbit A."/>
            <person name="Chetouani F."/>
            <person name="Couve E."/>
            <person name="de Daruvar A."/>
            <person name="Dehoux P."/>
            <person name="Domann E."/>
            <person name="Dominguez-Bernal G."/>
            <person name="Duchaud E."/>
            <person name="Durant L."/>
            <person name="Dussurget O."/>
            <person name="Entian K.-D."/>
            <person name="Fsihi H."/>
            <person name="Garcia-del Portillo F."/>
            <person name="Garrido P."/>
            <person name="Gautier L."/>
            <person name="Goebel W."/>
            <person name="Gomez-Lopez N."/>
            <person name="Hain T."/>
            <person name="Hauf J."/>
            <person name="Jackson D."/>
            <person name="Jones L.-M."/>
            <person name="Kaerst U."/>
            <person name="Kreft J."/>
            <person name="Kuhn M."/>
            <person name="Kunst F."/>
            <person name="Kurapkat G."/>
            <person name="Madueno E."/>
            <person name="Maitournam A."/>
            <person name="Mata Vicente J."/>
            <person name="Ng E."/>
            <person name="Nedjari H."/>
            <person name="Nordsiek G."/>
            <person name="Novella S."/>
            <person name="de Pablos B."/>
            <person name="Perez-Diaz J.-C."/>
            <person name="Purcell R."/>
            <person name="Remmel B."/>
            <person name="Rose M."/>
            <person name="Schlueter T."/>
            <person name="Simoes N."/>
            <person name="Tierrez A."/>
            <person name="Vazquez-Boland J.-A."/>
            <person name="Voss H."/>
            <person name="Wehland J."/>
            <person name="Cossart P."/>
        </authorList>
    </citation>
    <scope>NUCLEOTIDE SEQUENCE [LARGE SCALE GENOMIC DNA]</scope>
    <source>
        <strain>ATCC BAA-679 / EGD-e</strain>
    </source>
</reference>
<feature type="chain" id="PRO_0000152972" description="GTP 3',8-cyclase">
    <location>
        <begin position="1"/>
        <end position="333"/>
    </location>
</feature>
<feature type="domain" description="Radical SAM core" evidence="2">
    <location>
        <begin position="7"/>
        <end position="221"/>
    </location>
</feature>
<feature type="binding site" evidence="1">
    <location>
        <position position="16"/>
    </location>
    <ligand>
        <name>GTP</name>
        <dbReference type="ChEBI" id="CHEBI:37565"/>
    </ligand>
</feature>
<feature type="binding site" evidence="1">
    <location>
        <position position="23"/>
    </location>
    <ligand>
        <name>[4Fe-4S] cluster</name>
        <dbReference type="ChEBI" id="CHEBI:49883"/>
        <label>1</label>
        <note>4Fe-4S-S-AdoMet</note>
    </ligand>
</feature>
<feature type="binding site" evidence="1">
    <location>
        <position position="27"/>
    </location>
    <ligand>
        <name>[4Fe-4S] cluster</name>
        <dbReference type="ChEBI" id="CHEBI:49883"/>
        <label>1</label>
        <note>4Fe-4S-S-AdoMet</note>
    </ligand>
</feature>
<feature type="binding site" evidence="1">
    <location>
        <position position="29"/>
    </location>
    <ligand>
        <name>S-adenosyl-L-methionine</name>
        <dbReference type="ChEBI" id="CHEBI:59789"/>
    </ligand>
</feature>
<feature type="binding site" evidence="1">
    <location>
        <position position="30"/>
    </location>
    <ligand>
        <name>[4Fe-4S] cluster</name>
        <dbReference type="ChEBI" id="CHEBI:49883"/>
        <label>1</label>
        <note>4Fe-4S-S-AdoMet</note>
    </ligand>
</feature>
<feature type="binding site" evidence="1">
    <location>
        <position position="66"/>
    </location>
    <ligand>
        <name>GTP</name>
        <dbReference type="ChEBI" id="CHEBI:37565"/>
    </ligand>
</feature>
<feature type="binding site" evidence="1">
    <location>
        <position position="70"/>
    </location>
    <ligand>
        <name>S-adenosyl-L-methionine</name>
        <dbReference type="ChEBI" id="CHEBI:59789"/>
    </ligand>
</feature>
<feature type="binding site" evidence="1">
    <location>
        <position position="97"/>
    </location>
    <ligand>
        <name>GTP</name>
        <dbReference type="ChEBI" id="CHEBI:37565"/>
    </ligand>
</feature>
<feature type="binding site" evidence="1">
    <location>
        <position position="121"/>
    </location>
    <ligand>
        <name>S-adenosyl-L-methionine</name>
        <dbReference type="ChEBI" id="CHEBI:59789"/>
    </ligand>
</feature>
<feature type="binding site" evidence="1">
    <location>
        <position position="158"/>
    </location>
    <ligand>
        <name>GTP</name>
        <dbReference type="ChEBI" id="CHEBI:37565"/>
    </ligand>
</feature>
<feature type="binding site" evidence="1">
    <location>
        <position position="192"/>
    </location>
    <ligand>
        <name>S-adenosyl-L-methionine</name>
        <dbReference type="ChEBI" id="CHEBI:59789"/>
    </ligand>
</feature>
<feature type="binding site" evidence="1">
    <location>
        <position position="257"/>
    </location>
    <ligand>
        <name>[4Fe-4S] cluster</name>
        <dbReference type="ChEBI" id="CHEBI:49883"/>
        <label>2</label>
        <note>4Fe-4S-substrate</note>
    </ligand>
</feature>
<feature type="binding site" evidence="1">
    <location>
        <position position="260"/>
    </location>
    <ligand>
        <name>[4Fe-4S] cluster</name>
        <dbReference type="ChEBI" id="CHEBI:49883"/>
        <label>2</label>
        <note>4Fe-4S-substrate</note>
    </ligand>
</feature>
<feature type="binding site" evidence="1">
    <location>
        <begin position="262"/>
        <end position="264"/>
    </location>
    <ligand>
        <name>GTP</name>
        <dbReference type="ChEBI" id="CHEBI:37565"/>
    </ligand>
</feature>
<feature type="binding site" evidence="1">
    <location>
        <position position="274"/>
    </location>
    <ligand>
        <name>[4Fe-4S] cluster</name>
        <dbReference type="ChEBI" id="CHEBI:49883"/>
        <label>2</label>
        <note>4Fe-4S-substrate</note>
    </ligand>
</feature>
<gene>
    <name evidence="1" type="primary">moaA</name>
    <name type="ordered locus">lmo1047</name>
</gene>
<evidence type="ECO:0000255" key="1">
    <source>
        <dbReference type="HAMAP-Rule" id="MF_01225"/>
    </source>
</evidence>
<evidence type="ECO:0000255" key="2">
    <source>
        <dbReference type="PROSITE-ProRule" id="PRU01266"/>
    </source>
</evidence>
<proteinExistence type="inferred from homology"/>
<dbReference type="EC" id="4.1.99.22" evidence="1"/>
<dbReference type="EMBL" id="AL591977">
    <property type="protein sequence ID" value="CAC99125.1"/>
    <property type="molecule type" value="Genomic_DNA"/>
</dbReference>
<dbReference type="PIR" id="AG1205">
    <property type="entry name" value="AG1205"/>
</dbReference>
<dbReference type="RefSeq" id="NP_464572.1">
    <property type="nucleotide sequence ID" value="NC_003210.1"/>
</dbReference>
<dbReference type="RefSeq" id="WP_003722673.1">
    <property type="nucleotide sequence ID" value="NZ_CP149495.1"/>
</dbReference>
<dbReference type="SMR" id="Q8Y870"/>
<dbReference type="STRING" id="169963.gene:17593703"/>
<dbReference type="PaxDb" id="169963-lmo1047"/>
<dbReference type="EnsemblBacteria" id="CAC99125">
    <property type="protein sequence ID" value="CAC99125"/>
    <property type="gene ID" value="CAC99125"/>
</dbReference>
<dbReference type="GeneID" id="984816"/>
<dbReference type="KEGG" id="lmo:lmo1047"/>
<dbReference type="PATRIC" id="fig|169963.11.peg.1076"/>
<dbReference type="eggNOG" id="COG2896">
    <property type="taxonomic scope" value="Bacteria"/>
</dbReference>
<dbReference type="HOGENOM" id="CLU_009273_0_1_9"/>
<dbReference type="OrthoDB" id="9763993at2"/>
<dbReference type="PhylomeDB" id="Q8Y870"/>
<dbReference type="BioCyc" id="LMON169963:LMO1047-MONOMER"/>
<dbReference type="UniPathway" id="UPA00344"/>
<dbReference type="Proteomes" id="UP000000817">
    <property type="component" value="Chromosome"/>
</dbReference>
<dbReference type="GO" id="GO:0051539">
    <property type="term" value="F:4 iron, 4 sulfur cluster binding"/>
    <property type="evidence" value="ECO:0007669"/>
    <property type="project" value="UniProtKB-UniRule"/>
</dbReference>
<dbReference type="GO" id="GO:0061799">
    <property type="term" value="F:cyclic pyranopterin monophosphate synthase activity"/>
    <property type="evidence" value="ECO:0000318"/>
    <property type="project" value="GO_Central"/>
</dbReference>
<dbReference type="GO" id="GO:0061798">
    <property type="term" value="F:GTP 3',8'-cyclase activity"/>
    <property type="evidence" value="ECO:0000318"/>
    <property type="project" value="GO_Central"/>
</dbReference>
<dbReference type="GO" id="GO:0005525">
    <property type="term" value="F:GTP binding"/>
    <property type="evidence" value="ECO:0007669"/>
    <property type="project" value="UniProtKB-UniRule"/>
</dbReference>
<dbReference type="GO" id="GO:0046872">
    <property type="term" value="F:metal ion binding"/>
    <property type="evidence" value="ECO:0007669"/>
    <property type="project" value="UniProtKB-KW"/>
</dbReference>
<dbReference type="GO" id="GO:1904047">
    <property type="term" value="F:S-adenosyl-L-methionine binding"/>
    <property type="evidence" value="ECO:0007669"/>
    <property type="project" value="UniProtKB-UniRule"/>
</dbReference>
<dbReference type="GO" id="GO:0006777">
    <property type="term" value="P:Mo-molybdopterin cofactor biosynthetic process"/>
    <property type="evidence" value="ECO:0000318"/>
    <property type="project" value="GO_Central"/>
</dbReference>
<dbReference type="CDD" id="cd01335">
    <property type="entry name" value="Radical_SAM"/>
    <property type="match status" value="1"/>
</dbReference>
<dbReference type="CDD" id="cd21117">
    <property type="entry name" value="Twitch_MoaA"/>
    <property type="match status" value="1"/>
</dbReference>
<dbReference type="FunFam" id="3.20.20.70:FF:000250">
    <property type="entry name" value="GTP 3',8-cyclase"/>
    <property type="match status" value="1"/>
</dbReference>
<dbReference type="Gene3D" id="3.20.20.70">
    <property type="entry name" value="Aldolase class I"/>
    <property type="match status" value="1"/>
</dbReference>
<dbReference type="HAMAP" id="MF_01225_B">
    <property type="entry name" value="MoaA_B"/>
    <property type="match status" value="1"/>
</dbReference>
<dbReference type="InterPro" id="IPR013785">
    <property type="entry name" value="Aldolase_TIM"/>
</dbReference>
<dbReference type="InterPro" id="IPR006638">
    <property type="entry name" value="Elp3/MiaA/NifB-like_rSAM"/>
</dbReference>
<dbReference type="InterPro" id="IPR013483">
    <property type="entry name" value="MoaA"/>
</dbReference>
<dbReference type="InterPro" id="IPR000385">
    <property type="entry name" value="MoaA_NifB_PqqE_Fe-S-bd_CS"/>
</dbReference>
<dbReference type="InterPro" id="IPR010505">
    <property type="entry name" value="MoaA_twitch"/>
</dbReference>
<dbReference type="InterPro" id="IPR050105">
    <property type="entry name" value="MoCo_biosynth_MoaA/MoaC"/>
</dbReference>
<dbReference type="InterPro" id="IPR007197">
    <property type="entry name" value="rSAM"/>
</dbReference>
<dbReference type="NCBIfam" id="TIGR02666">
    <property type="entry name" value="moaA"/>
    <property type="match status" value="1"/>
</dbReference>
<dbReference type="NCBIfam" id="NF001199">
    <property type="entry name" value="PRK00164.2-1"/>
    <property type="match status" value="1"/>
</dbReference>
<dbReference type="PANTHER" id="PTHR22960:SF0">
    <property type="entry name" value="MOLYBDENUM COFACTOR BIOSYNTHESIS PROTEIN 1"/>
    <property type="match status" value="1"/>
</dbReference>
<dbReference type="PANTHER" id="PTHR22960">
    <property type="entry name" value="MOLYBDOPTERIN COFACTOR SYNTHESIS PROTEIN A"/>
    <property type="match status" value="1"/>
</dbReference>
<dbReference type="Pfam" id="PF13353">
    <property type="entry name" value="Fer4_12"/>
    <property type="match status" value="1"/>
</dbReference>
<dbReference type="Pfam" id="PF06463">
    <property type="entry name" value="Mob_synth_C"/>
    <property type="match status" value="1"/>
</dbReference>
<dbReference type="Pfam" id="PF04055">
    <property type="entry name" value="Radical_SAM"/>
    <property type="match status" value="1"/>
</dbReference>
<dbReference type="SFLD" id="SFLDG01383">
    <property type="entry name" value="cyclic_pyranopterin_phosphate"/>
    <property type="match status" value="1"/>
</dbReference>
<dbReference type="SFLD" id="SFLDS00029">
    <property type="entry name" value="Radical_SAM"/>
    <property type="match status" value="1"/>
</dbReference>
<dbReference type="SMART" id="SM00729">
    <property type="entry name" value="Elp3"/>
    <property type="match status" value="1"/>
</dbReference>
<dbReference type="SUPFAM" id="SSF102114">
    <property type="entry name" value="Radical SAM enzymes"/>
    <property type="match status" value="1"/>
</dbReference>
<dbReference type="PROSITE" id="PS01305">
    <property type="entry name" value="MOAA_NIFB_PQQE"/>
    <property type="match status" value="1"/>
</dbReference>
<dbReference type="PROSITE" id="PS51918">
    <property type="entry name" value="RADICAL_SAM"/>
    <property type="match status" value="1"/>
</dbReference>
<name>MOAA_LISMO</name>
<organism>
    <name type="scientific">Listeria monocytogenes serovar 1/2a (strain ATCC BAA-679 / EGD-e)</name>
    <dbReference type="NCBI Taxonomy" id="169963"/>
    <lineage>
        <taxon>Bacteria</taxon>
        <taxon>Bacillati</taxon>
        <taxon>Bacillota</taxon>
        <taxon>Bacilli</taxon>
        <taxon>Bacillales</taxon>
        <taxon>Listeriaceae</taxon>
        <taxon>Listeria</taxon>
    </lineage>
</organism>